<evidence type="ECO:0000255" key="1">
    <source>
        <dbReference type="HAMAP-Rule" id="MF_02105"/>
    </source>
</evidence>
<comment type="function">
    <text evidence="1">Is involved in L-lactate degradation and allows cells to grow with lactate as the sole carbon source.</text>
</comment>
<comment type="similarity">
    <text evidence="1">Belongs to the LutA/YkgE family.</text>
</comment>
<protein>
    <recommendedName>
        <fullName evidence="1">Lactate utilization protein A</fullName>
    </recommendedName>
</protein>
<organism>
    <name type="scientific">Bacillus pumilus (strain SAFR-032)</name>
    <dbReference type="NCBI Taxonomy" id="315750"/>
    <lineage>
        <taxon>Bacteria</taxon>
        <taxon>Bacillati</taxon>
        <taxon>Bacillota</taxon>
        <taxon>Bacilli</taxon>
        <taxon>Bacillales</taxon>
        <taxon>Bacillaceae</taxon>
        <taxon>Bacillus</taxon>
    </lineage>
</organism>
<sequence length="238" mass="26259">MKVHLFVTCLIDTMQPNVGKATVEVLERLGVEVEFPESQVCCGQPAFNSGYTKETIKAAKNMIKAFETAEYVVTPSGSCKAMFLEYPQLLKEDPVWSTQAEALAEKTYELTEFIVDILHVTDVGASLKGNATYHTSCHMTRLLRIKEAPFTLLSNVKDLSMTPLPRAENCCGFGGTFSVKMTPISEQMVDEKVQSIEETGAQYIIGADCGCLLNIGGRLNRLDKPIQVMHIAEVLNSR</sequence>
<gene>
    <name evidence="1" type="primary">lutA</name>
    <name type="synonym">yvfV</name>
    <name type="ordered locus">BPUM_1672</name>
</gene>
<accession>A8FDN4</accession>
<reference key="1">
    <citation type="journal article" date="2007" name="PLoS ONE">
        <title>Paradoxical DNA repair and peroxide resistance gene conservation in Bacillus pumilus SAFR-032.</title>
        <authorList>
            <person name="Gioia J."/>
            <person name="Yerrapragada S."/>
            <person name="Qin X."/>
            <person name="Jiang H."/>
            <person name="Igboeli O.C."/>
            <person name="Muzny D."/>
            <person name="Dugan-Rocha S."/>
            <person name="Ding Y."/>
            <person name="Hawes A."/>
            <person name="Liu W."/>
            <person name="Perez L."/>
            <person name="Kovar C."/>
            <person name="Dinh H."/>
            <person name="Lee S."/>
            <person name="Nazareth L."/>
            <person name="Blyth P."/>
            <person name="Holder M."/>
            <person name="Buhay C."/>
            <person name="Tirumalai M.R."/>
            <person name="Liu Y."/>
            <person name="Dasgupta I."/>
            <person name="Bokhetache L."/>
            <person name="Fujita M."/>
            <person name="Karouia F."/>
            <person name="Eswara Moorthy P."/>
            <person name="Siefert J."/>
            <person name="Uzman A."/>
            <person name="Buzumbo P."/>
            <person name="Verma A."/>
            <person name="Zwiya H."/>
            <person name="McWilliams B.D."/>
            <person name="Olowu A."/>
            <person name="Clinkenbeard K.D."/>
            <person name="Newcombe D."/>
            <person name="Golebiewski L."/>
            <person name="Petrosino J.F."/>
            <person name="Nicholson W.L."/>
            <person name="Fox G.E."/>
            <person name="Venkateswaran K."/>
            <person name="Highlander S.K."/>
            <person name="Weinstock G.M."/>
        </authorList>
    </citation>
    <scope>NUCLEOTIDE SEQUENCE [LARGE SCALE GENOMIC DNA]</scope>
    <source>
        <strain>SAFR-032</strain>
    </source>
</reference>
<dbReference type="EMBL" id="CP000813">
    <property type="protein sequence ID" value="ABV62351.1"/>
    <property type="molecule type" value="Genomic_DNA"/>
</dbReference>
<dbReference type="RefSeq" id="WP_012010083.1">
    <property type="nucleotide sequence ID" value="NC_009848.4"/>
</dbReference>
<dbReference type="SMR" id="A8FDN4"/>
<dbReference type="STRING" id="315750.BPUM_1672"/>
<dbReference type="GeneID" id="5620933"/>
<dbReference type="KEGG" id="bpu:BPUM_1672"/>
<dbReference type="eggNOG" id="COG0247">
    <property type="taxonomic scope" value="Bacteria"/>
</dbReference>
<dbReference type="HOGENOM" id="CLU_023081_1_0_9"/>
<dbReference type="OrthoDB" id="9770306at2"/>
<dbReference type="Proteomes" id="UP000001355">
    <property type="component" value="Chromosome"/>
</dbReference>
<dbReference type="GO" id="GO:0005829">
    <property type="term" value="C:cytosol"/>
    <property type="evidence" value="ECO:0007669"/>
    <property type="project" value="TreeGrafter"/>
</dbReference>
<dbReference type="GO" id="GO:0016491">
    <property type="term" value="F:oxidoreductase activity"/>
    <property type="evidence" value="ECO:0007669"/>
    <property type="project" value="UniProtKB-ARBA"/>
</dbReference>
<dbReference type="GO" id="GO:0006089">
    <property type="term" value="P:lactate metabolic process"/>
    <property type="evidence" value="ECO:0007669"/>
    <property type="project" value="UniProtKB-UniRule"/>
</dbReference>
<dbReference type="HAMAP" id="MF_02105">
    <property type="entry name" value="LutA"/>
    <property type="match status" value="1"/>
</dbReference>
<dbReference type="InterPro" id="IPR004017">
    <property type="entry name" value="Cys_rich_dom"/>
</dbReference>
<dbReference type="InterPro" id="IPR022822">
    <property type="entry name" value="LutA"/>
</dbReference>
<dbReference type="PANTHER" id="PTHR30296:SF0">
    <property type="entry name" value="LACTATE UTILIZATION PROTEIN A"/>
    <property type="match status" value="1"/>
</dbReference>
<dbReference type="PANTHER" id="PTHR30296">
    <property type="entry name" value="UNCHARACTERIZED PROTEIN YKGE"/>
    <property type="match status" value="1"/>
</dbReference>
<dbReference type="Pfam" id="PF02754">
    <property type="entry name" value="CCG"/>
    <property type="match status" value="2"/>
</dbReference>
<name>LUTA_BACP2</name>
<proteinExistence type="inferred from homology"/>
<feature type="chain" id="PRO_0000384042" description="Lactate utilization protein A">
    <location>
        <begin position="1"/>
        <end position="238"/>
    </location>
</feature>